<accession>A4J6G9</accession>
<name>Y2155_DESRM</name>
<protein>
    <recommendedName>
        <fullName evidence="1">UPF0145 protein Dred_2155</fullName>
    </recommendedName>
</protein>
<evidence type="ECO:0000255" key="1">
    <source>
        <dbReference type="HAMAP-Rule" id="MF_00338"/>
    </source>
</evidence>
<dbReference type="EMBL" id="CP000612">
    <property type="protein sequence ID" value="ABO50672.1"/>
    <property type="molecule type" value="Genomic_DNA"/>
</dbReference>
<dbReference type="RefSeq" id="WP_011878474.1">
    <property type="nucleotide sequence ID" value="NC_009253.1"/>
</dbReference>
<dbReference type="SMR" id="A4J6G9"/>
<dbReference type="STRING" id="349161.Dred_2155"/>
<dbReference type="KEGG" id="drm:Dred_2155"/>
<dbReference type="eggNOG" id="COG0393">
    <property type="taxonomic scope" value="Bacteria"/>
</dbReference>
<dbReference type="HOGENOM" id="CLU_117144_3_2_9"/>
<dbReference type="OrthoDB" id="9796448at2"/>
<dbReference type="Proteomes" id="UP000001556">
    <property type="component" value="Chromosome"/>
</dbReference>
<dbReference type="Gene3D" id="3.30.110.70">
    <property type="entry name" value="Hypothetical protein apc22750. Chain B"/>
    <property type="match status" value="1"/>
</dbReference>
<dbReference type="HAMAP" id="MF_00338">
    <property type="entry name" value="UPF0145"/>
    <property type="match status" value="1"/>
</dbReference>
<dbReference type="InterPro" id="IPR035439">
    <property type="entry name" value="UPF0145_dom_sf"/>
</dbReference>
<dbReference type="InterPro" id="IPR002765">
    <property type="entry name" value="UPF0145_YbjQ-like"/>
</dbReference>
<dbReference type="PANTHER" id="PTHR34068">
    <property type="entry name" value="UPF0145 PROTEIN YBJQ"/>
    <property type="match status" value="1"/>
</dbReference>
<dbReference type="PANTHER" id="PTHR34068:SF1">
    <property type="entry name" value="UPF0145 PROTEIN YBJQ"/>
    <property type="match status" value="1"/>
</dbReference>
<dbReference type="Pfam" id="PF01906">
    <property type="entry name" value="YbjQ_1"/>
    <property type="match status" value="1"/>
</dbReference>
<dbReference type="SUPFAM" id="SSF117782">
    <property type="entry name" value="YbjQ-like"/>
    <property type="match status" value="1"/>
</dbReference>
<proteinExistence type="inferred from homology"/>
<sequence length="103" mass="11031">MIITTTGIIEGKPIRQYFGLVNGEAIMGANVVRDIFASITDIVGGRSGAYESKLAHAREIALEEMTEQARRMGANAIVGVDLDYEVIREGMLMVSASGTAVQI</sequence>
<organism>
    <name type="scientific">Desulforamulus reducens (strain ATCC BAA-1160 / DSM 100696 / MI-1)</name>
    <name type="common">Desulfotomaculum reducens</name>
    <dbReference type="NCBI Taxonomy" id="349161"/>
    <lineage>
        <taxon>Bacteria</taxon>
        <taxon>Bacillati</taxon>
        <taxon>Bacillota</taxon>
        <taxon>Clostridia</taxon>
        <taxon>Eubacteriales</taxon>
        <taxon>Peptococcaceae</taxon>
        <taxon>Desulforamulus</taxon>
    </lineage>
</organism>
<gene>
    <name type="ordered locus">Dred_2155</name>
</gene>
<keyword id="KW-1185">Reference proteome</keyword>
<comment type="similarity">
    <text evidence="1">Belongs to the UPF0145 family.</text>
</comment>
<reference key="1">
    <citation type="submission" date="2007-03" db="EMBL/GenBank/DDBJ databases">
        <title>Complete sequence of Desulfotomaculum reducens MI-1.</title>
        <authorList>
            <consortium name="US DOE Joint Genome Institute"/>
            <person name="Copeland A."/>
            <person name="Lucas S."/>
            <person name="Lapidus A."/>
            <person name="Barry K."/>
            <person name="Detter J.C."/>
            <person name="Glavina del Rio T."/>
            <person name="Hammon N."/>
            <person name="Israni S."/>
            <person name="Dalin E."/>
            <person name="Tice H."/>
            <person name="Pitluck S."/>
            <person name="Sims D."/>
            <person name="Brettin T."/>
            <person name="Bruce D."/>
            <person name="Han C."/>
            <person name="Tapia R."/>
            <person name="Schmutz J."/>
            <person name="Larimer F."/>
            <person name="Land M."/>
            <person name="Hauser L."/>
            <person name="Kyrpides N."/>
            <person name="Kim E."/>
            <person name="Tebo B.M."/>
            <person name="Richardson P."/>
        </authorList>
    </citation>
    <scope>NUCLEOTIDE SEQUENCE [LARGE SCALE GENOMIC DNA]</scope>
    <source>
        <strain>ATCC BAA-1160 / DSM 100696 / MI-1</strain>
    </source>
</reference>
<feature type="chain" id="PRO_1000079300" description="UPF0145 protein Dred_2155">
    <location>
        <begin position="1"/>
        <end position="103"/>
    </location>
</feature>